<organism>
    <name type="scientific">Pyrococcus horikoshii (strain ATCC 700860 / DSM 12428 / JCM 9974 / NBRC 100139 / OT-3)</name>
    <dbReference type="NCBI Taxonomy" id="70601"/>
    <lineage>
        <taxon>Archaea</taxon>
        <taxon>Methanobacteriati</taxon>
        <taxon>Methanobacteriota</taxon>
        <taxon>Thermococci</taxon>
        <taxon>Thermococcales</taxon>
        <taxon>Thermococcaceae</taxon>
        <taxon>Pyrococcus</taxon>
    </lineage>
</organism>
<feature type="chain" id="PRO_0000084750" description="Proteasome-activating nucleotidase">
    <location>
        <begin position="1"/>
        <end position="399"/>
    </location>
</feature>
<feature type="region of interest" description="Docks into pockets in the proteasome alpha-ring to cause gate opening" evidence="1">
    <location>
        <begin position="397"/>
        <end position="399"/>
    </location>
</feature>
<feature type="coiled-coil region" evidence="1">
    <location>
        <begin position="19"/>
        <end position="60"/>
    </location>
</feature>
<feature type="binding site" evidence="1">
    <location>
        <begin position="184"/>
        <end position="189"/>
    </location>
    <ligand>
        <name>ATP</name>
        <dbReference type="ChEBI" id="CHEBI:30616"/>
    </ligand>
</feature>
<feature type="binding site" evidence="1">
    <location>
        <position position="323"/>
    </location>
    <ligand>
        <name>ATP</name>
        <dbReference type="ChEBI" id="CHEBI:30616"/>
    </ligand>
</feature>
<feature type="helix" evidence="2">
    <location>
        <begin position="139"/>
        <end position="141"/>
    </location>
</feature>
<feature type="helix" evidence="2">
    <location>
        <begin position="146"/>
        <end position="155"/>
    </location>
</feature>
<feature type="helix" evidence="2">
    <location>
        <begin position="157"/>
        <end position="161"/>
    </location>
</feature>
<feature type="turn" evidence="2">
    <location>
        <begin position="164"/>
        <end position="166"/>
    </location>
</feature>
<feature type="helix" evidence="2">
    <location>
        <begin position="167"/>
        <end position="169"/>
    </location>
</feature>
<feature type="strand" evidence="2">
    <location>
        <begin position="175"/>
        <end position="182"/>
    </location>
</feature>
<feature type="helix" evidence="2">
    <location>
        <begin position="187"/>
        <end position="197"/>
    </location>
</feature>
<feature type="strand" evidence="2">
    <location>
        <begin position="201"/>
        <end position="206"/>
    </location>
</feature>
<feature type="helix" evidence="2">
    <location>
        <begin position="207"/>
        <end position="210"/>
    </location>
</feature>
<feature type="helix" evidence="2">
    <location>
        <begin position="217"/>
        <end position="231"/>
    </location>
</feature>
<feature type="strand" evidence="2">
    <location>
        <begin position="234"/>
        <end position="240"/>
    </location>
</feature>
<feature type="helix" evidence="2">
    <location>
        <begin position="243"/>
        <end position="246"/>
    </location>
</feature>
<feature type="helix" evidence="2">
    <location>
        <begin position="259"/>
        <end position="271"/>
    </location>
</feature>
<feature type="turn" evidence="2">
    <location>
        <begin position="272"/>
        <end position="274"/>
    </location>
</feature>
<feature type="strand" evidence="2">
    <location>
        <begin position="279"/>
        <end position="287"/>
    </location>
</feature>
<feature type="helix" evidence="2">
    <location>
        <begin position="289"/>
        <end position="291"/>
    </location>
</feature>
<feature type="helix" evidence="2">
    <location>
        <begin position="294"/>
        <end position="296"/>
    </location>
</feature>
<feature type="strand" evidence="2">
    <location>
        <begin position="301"/>
        <end position="307"/>
    </location>
</feature>
<feature type="helix" evidence="2">
    <location>
        <begin position="313"/>
        <end position="322"/>
    </location>
</feature>
<feature type="turn" evidence="2">
    <location>
        <begin position="323"/>
        <end position="326"/>
    </location>
</feature>
<feature type="strand" evidence="2">
    <location>
        <begin position="329"/>
        <end position="331"/>
    </location>
</feature>
<feature type="helix" evidence="2">
    <location>
        <begin position="334"/>
        <end position="339"/>
    </location>
</feature>
<feature type="turn" evidence="2">
    <location>
        <begin position="340"/>
        <end position="343"/>
    </location>
</feature>
<feature type="helix" evidence="2">
    <location>
        <begin position="346"/>
        <end position="362"/>
    </location>
</feature>
<feature type="strand" evidence="2">
    <location>
        <begin position="366"/>
        <end position="368"/>
    </location>
</feature>
<feature type="helix" evidence="2">
    <location>
        <begin position="370"/>
        <end position="380"/>
    </location>
</feature>
<feature type="helix" evidence="2">
    <location>
        <begin position="383"/>
        <end position="391"/>
    </location>
</feature>
<protein>
    <recommendedName>
        <fullName evidence="1">Proteasome-activating nucleotidase</fullName>
        <shortName evidence="1">PAN</shortName>
    </recommendedName>
    <alternativeName>
        <fullName evidence="1">Proteasomal ATPase</fullName>
    </alternativeName>
    <alternativeName>
        <fullName evidence="1">Proteasome regulatory ATPase</fullName>
    </alternativeName>
    <alternativeName>
        <fullName evidence="1">Proteasome regulatory particle</fullName>
    </alternativeName>
</protein>
<proteinExistence type="evidence at protein level"/>
<gene>
    <name evidence="1" type="primary">pan</name>
    <name type="ordered locus">PH0201</name>
</gene>
<accession>O57940</accession>
<reference key="1">
    <citation type="journal article" date="1998" name="DNA Res.">
        <title>Complete sequence and gene organization of the genome of a hyper-thermophilic archaebacterium, Pyrococcus horikoshii OT3.</title>
        <authorList>
            <person name="Kawarabayasi Y."/>
            <person name="Sawada M."/>
            <person name="Horikawa H."/>
            <person name="Haikawa Y."/>
            <person name="Hino Y."/>
            <person name="Yamamoto S."/>
            <person name="Sekine M."/>
            <person name="Baba S."/>
            <person name="Kosugi H."/>
            <person name="Hosoyama A."/>
            <person name="Nagai Y."/>
            <person name="Sakai M."/>
            <person name="Ogura K."/>
            <person name="Otsuka R."/>
            <person name="Nakazawa H."/>
            <person name="Takamiya M."/>
            <person name="Ohfuku Y."/>
            <person name="Funahashi T."/>
            <person name="Tanaka T."/>
            <person name="Kudoh Y."/>
            <person name="Yamazaki J."/>
            <person name="Kushida N."/>
            <person name="Oguchi A."/>
            <person name="Aoki K."/>
            <person name="Yoshizawa T."/>
            <person name="Nakamura Y."/>
            <person name="Robb F.T."/>
            <person name="Horikoshi K."/>
            <person name="Masuchi Y."/>
            <person name="Shizuya H."/>
            <person name="Kikuchi H."/>
        </authorList>
    </citation>
    <scope>NUCLEOTIDE SEQUENCE [LARGE SCALE GENOMIC DNA]</scope>
    <source>
        <strain>ATCC 700860 / DSM 12428 / JCM 9974 / NBRC 100139 / OT-3</strain>
    </source>
</reference>
<comment type="function">
    <text evidence="1">ATPase which is responsible for recognizing, binding, unfolding and translocation of substrate proteins into the archaeal 20S proteasome core particle. Is essential for opening the gate of the 20S proteasome via an interaction with its C-terminus, thereby allowing substrate entry and access to the site of proteolysis. Thus, the C-termini of the proteasomal ATPase function like a 'key in a lock' to induce gate opening and therefore regulate proteolysis. Unfolding activity requires energy from ATP hydrolysis, whereas ATP binding alone promotes ATPase-20S proteasome association which triggers gate opening, and supports translocation of unfolded substrates.</text>
</comment>
<comment type="subunit">
    <text evidence="1">Homohexamer. The hexameric complex has a two-ring architecture resembling a top hat that caps the 20S proteasome core at one or both ends. Upon ATP-binding, the C-terminus of PAN interacts with the alpha-rings of the proteasome core by binding to the intersubunit pockets.</text>
</comment>
<comment type="subcellular location">
    <subcellularLocation>
        <location evidence="1">Cytoplasm</location>
    </subcellularLocation>
</comment>
<comment type="domain">
    <text evidence="1">Consists of three main regions, an N-terminal coiled-coil domain that may assist in substrate recognition, an interdomain involved in PAN hexamerization, and a C-terminal ATPase domain of the AAA type.</text>
</comment>
<comment type="similarity">
    <text evidence="1">Belongs to the AAA ATPase family.</text>
</comment>
<sequence length="399" mass="45177">MSVMSGDEVQFQGDYDDYITYLKRRIRQLELQVRMLEADKERLERELSRLRSEMSRLRQPPAFAGTVIEVLDEDRAIVQNYNGPRFVVRIAPWIDRKKLRPGTRVALDQRTMAVVEILPTSKDPTVLGFEVIERPNVTYNDIGGLKKQLQELREAIELPLKHPELFEEVGIDPPKGVLLYGPPGCGKTLMAKALAHEVNATFIRVVGSELVRKYIGEGARLVHELFELAKEKAPTIIFIDEIDAIGAKRMDETTGGEREVNRTLMQLLAEMDGFDPRGNVKVIAATNRPDILDPALLRPGRFDRLIEVPLPDFEGRLEILKVHTRRMKLKGVDLRAIAEMTEGASGADLKAIATEAGMFAIRERRTYVTQEDFLKAVDKVLGNERKLLQQITSHEVIYG</sequence>
<name>PAN_PYRHO</name>
<keyword id="KW-0002">3D-structure</keyword>
<keyword id="KW-0067">ATP-binding</keyword>
<keyword id="KW-0143">Chaperone</keyword>
<keyword id="KW-0175">Coiled coil</keyword>
<keyword id="KW-0963">Cytoplasm</keyword>
<keyword id="KW-0547">Nucleotide-binding</keyword>
<keyword id="KW-0647">Proteasome</keyword>
<evidence type="ECO:0000255" key="1">
    <source>
        <dbReference type="HAMAP-Rule" id="MF_00553"/>
    </source>
</evidence>
<evidence type="ECO:0007829" key="2">
    <source>
        <dbReference type="PDB" id="5EQT"/>
    </source>
</evidence>
<dbReference type="EMBL" id="BA000001">
    <property type="protein sequence ID" value="BAA29270.1"/>
    <property type="molecule type" value="Genomic_DNA"/>
</dbReference>
<dbReference type="PIR" id="G71242">
    <property type="entry name" value="G71242"/>
</dbReference>
<dbReference type="PDB" id="5EQT">
    <property type="method" value="X-ray"/>
    <property type="resolution" value="1.94 A"/>
    <property type="chains" value="A=136-392"/>
</dbReference>
<dbReference type="PDBsum" id="5EQT"/>
<dbReference type="SMR" id="O57940"/>
<dbReference type="STRING" id="70601.gene:9377111"/>
<dbReference type="EnsemblBacteria" id="BAA29270">
    <property type="protein sequence ID" value="BAA29270"/>
    <property type="gene ID" value="BAA29270"/>
</dbReference>
<dbReference type="KEGG" id="pho:PH0201"/>
<dbReference type="eggNOG" id="arCOG01306">
    <property type="taxonomic scope" value="Archaea"/>
</dbReference>
<dbReference type="Proteomes" id="UP000000752">
    <property type="component" value="Chromosome"/>
</dbReference>
<dbReference type="GO" id="GO:0005737">
    <property type="term" value="C:cytoplasm"/>
    <property type="evidence" value="ECO:0007669"/>
    <property type="project" value="UniProtKB-SubCell"/>
</dbReference>
<dbReference type="GO" id="GO:0022623">
    <property type="term" value="C:proteasome-activating nucleotidase complex"/>
    <property type="evidence" value="ECO:0007669"/>
    <property type="project" value="UniProtKB-UniRule"/>
</dbReference>
<dbReference type="GO" id="GO:0005524">
    <property type="term" value="F:ATP binding"/>
    <property type="evidence" value="ECO:0007669"/>
    <property type="project" value="UniProtKB-UniRule"/>
</dbReference>
<dbReference type="GO" id="GO:0016887">
    <property type="term" value="F:ATP hydrolysis activity"/>
    <property type="evidence" value="ECO:0007669"/>
    <property type="project" value="UniProtKB-UniRule"/>
</dbReference>
<dbReference type="GO" id="GO:0010498">
    <property type="term" value="P:proteasomal protein catabolic process"/>
    <property type="evidence" value="ECO:0007669"/>
    <property type="project" value="UniProtKB-UniRule"/>
</dbReference>
<dbReference type="GO" id="GO:0043335">
    <property type="term" value="P:protein unfolding"/>
    <property type="evidence" value="ECO:0007669"/>
    <property type="project" value="UniProtKB-UniRule"/>
</dbReference>
<dbReference type="CDD" id="cd19502">
    <property type="entry name" value="RecA-like_PAN_like"/>
    <property type="match status" value="1"/>
</dbReference>
<dbReference type="FunFam" id="3.40.50.300:FF:000033">
    <property type="entry name" value="26S protease regulatory subunit 6B"/>
    <property type="match status" value="1"/>
</dbReference>
<dbReference type="FunFam" id="1.10.8.60:FF:000006">
    <property type="entry name" value="26S protease regulatory subunit 8"/>
    <property type="match status" value="1"/>
</dbReference>
<dbReference type="Gene3D" id="1.10.8.60">
    <property type="match status" value="1"/>
</dbReference>
<dbReference type="Gene3D" id="1.20.5.1700">
    <property type="match status" value="1"/>
</dbReference>
<dbReference type="Gene3D" id="2.40.50.140">
    <property type="entry name" value="Nucleic acid-binding proteins"/>
    <property type="match status" value="1"/>
</dbReference>
<dbReference type="Gene3D" id="3.40.50.300">
    <property type="entry name" value="P-loop containing nucleotide triphosphate hydrolases"/>
    <property type="match status" value="1"/>
</dbReference>
<dbReference type="HAMAP" id="MF_00553">
    <property type="entry name" value="PAN"/>
    <property type="match status" value="1"/>
</dbReference>
<dbReference type="InterPro" id="IPR050221">
    <property type="entry name" value="26S_Proteasome_ATPase"/>
</dbReference>
<dbReference type="InterPro" id="IPR003593">
    <property type="entry name" value="AAA+_ATPase"/>
</dbReference>
<dbReference type="InterPro" id="IPR041569">
    <property type="entry name" value="AAA_lid_3"/>
</dbReference>
<dbReference type="InterPro" id="IPR003959">
    <property type="entry name" value="ATPase_AAA_core"/>
</dbReference>
<dbReference type="InterPro" id="IPR003960">
    <property type="entry name" value="ATPase_AAA_CS"/>
</dbReference>
<dbReference type="InterPro" id="IPR012340">
    <property type="entry name" value="NA-bd_OB-fold"/>
</dbReference>
<dbReference type="InterPro" id="IPR023501">
    <property type="entry name" value="Nucleotidase_PAN"/>
</dbReference>
<dbReference type="InterPro" id="IPR027417">
    <property type="entry name" value="P-loop_NTPase"/>
</dbReference>
<dbReference type="InterPro" id="IPR032501">
    <property type="entry name" value="Prot_ATP_ID_OB_2nd"/>
</dbReference>
<dbReference type="NCBIfam" id="NF003069">
    <property type="entry name" value="PRK03992.1"/>
    <property type="match status" value="1"/>
</dbReference>
<dbReference type="NCBIfam" id="TIGR01242">
    <property type="entry name" value="proteasome-activating nucleotidase"/>
    <property type="match status" value="1"/>
</dbReference>
<dbReference type="PANTHER" id="PTHR23073">
    <property type="entry name" value="26S PROTEASOME REGULATORY SUBUNIT"/>
    <property type="match status" value="1"/>
</dbReference>
<dbReference type="Pfam" id="PF00004">
    <property type="entry name" value="AAA"/>
    <property type="match status" value="1"/>
</dbReference>
<dbReference type="Pfam" id="PF17862">
    <property type="entry name" value="AAA_lid_3"/>
    <property type="match status" value="1"/>
</dbReference>
<dbReference type="Pfam" id="PF16450">
    <property type="entry name" value="Prot_ATP_ID_OB_C"/>
    <property type="match status" value="1"/>
</dbReference>
<dbReference type="SMART" id="SM00382">
    <property type="entry name" value="AAA"/>
    <property type="match status" value="1"/>
</dbReference>
<dbReference type="SUPFAM" id="SSF52540">
    <property type="entry name" value="P-loop containing nucleoside triphosphate hydrolases"/>
    <property type="match status" value="1"/>
</dbReference>
<dbReference type="PROSITE" id="PS00674">
    <property type="entry name" value="AAA"/>
    <property type="match status" value="1"/>
</dbReference>